<dbReference type="EMBL" id="AE017126">
    <property type="protein sequence ID" value="AAQ00649.1"/>
    <property type="molecule type" value="Genomic_DNA"/>
</dbReference>
<dbReference type="RefSeq" id="NP_875996.1">
    <property type="nucleotide sequence ID" value="NC_005042.1"/>
</dbReference>
<dbReference type="SMR" id="Q7VA62"/>
<dbReference type="STRING" id="167539.Pro_1605"/>
<dbReference type="EnsemblBacteria" id="AAQ00649">
    <property type="protein sequence ID" value="AAQ00649"/>
    <property type="gene ID" value="Pro_1605"/>
</dbReference>
<dbReference type="KEGG" id="pma:Pro_1605"/>
<dbReference type="PATRIC" id="fig|167539.5.peg.1696"/>
<dbReference type="eggNOG" id="COG0712">
    <property type="taxonomic scope" value="Bacteria"/>
</dbReference>
<dbReference type="HOGENOM" id="CLU_085114_4_2_3"/>
<dbReference type="OrthoDB" id="9802471at2"/>
<dbReference type="Proteomes" id="UP000001420">
    <property type="component" value="Chromosome"/>
</dbReference>
<dbReference type="GO" id="GO:0031676">
    <property type="term" value="C:plasma membrane-derived thylakoid membrane"/>
    <property type="evidence" value="ECO:0007669"/>
    <property type="project" value="UniProtKB-SubCell"/>
</dbReference>
<dbReference type="GO" id="GO:0045259">
    <property type="term" value="C:proton-transporting ATP synthase complex"/>
    <property type="evidence" value="ECO:0007669"/>
    <property type="project" value="UniProtKB-KW"/>
</dbReference>
<dbReference type="GO" id="GO:0046933">
    <property type="term" value="F:proton-transporting ATP synthase activity, rotational mechanism"/>
    <property type="evidence" value="ECO:0007669"/>
    <property type="project" value="UniProtKB-UniRule"/>
</dbReference>
<dbReference type="Gene3D" id="1.10.520.20">
    <property type="entry name" value="N-terminal domain of the delta subunit of the F1F0-ATP synthase"/>
    <property type="match status" value="1"/>
</dbReference>
<dbReference type="HAMAP" id="MF_01416">
    <property type="entry name" value="ATP_synth_delta_bact"/>
    <property type="match status" value="1"/>
</dbReference>
<dbReference type="InterPro" id="IPR026015">
    <property type="entry name" value="ATP_synth_OSCP/delta_N_sf"/>
</dbReference>
<dbReference type="InterPro" id="IPR020781">
    <property type="entry name" value="ATPase_OSCP/d_CS"/>
</dbReference>
<dbReference type="InterPro" id="IPR000711">
    <property type="entry name" value="ATPase_OSCP/dsu"/>
</dbReference>
<dbReference type="NCBIfam" id="TIGR01145">
    <property type="entry name" value="ATP_synt_delta"/>
    <property type="match status" value="1"/>
</dbReference>
<dbReference type="PANTHER" id="PTHR11910">
    <property type="entry name" value="ATP SYNTHASE DELTA CHAIN"/>
    <property type="match status" value="1"/>
</dbReference>
<dbReference type="Pfam" id="PF00213">
    <property type="entry name" value="OSCP"/>
    <property type="match status" value="1"/>
</dbReference>
<dbReference type="PRINTS" id="PR00125">
    <property type="entry name" value="ATPASEDELTA"/>
</dbReference>
<dbReference type="SUPFAM" id="SSF47928">
    <property type="entry name" value="N-terminal domain of the delta subunit of the F1F0-ATP synthase"/>
    <property type="match status" value="1"/>
</dbReference>
<dbReference type="PROSITE" id="PS00389">
    <property type="entry name" value="ATPASE_DELTA"/>
    <property type="match status" value="1"/>
</dbReference>
<accession>Q7VA62</accession>
<comment type="function">
    <text evidence="1">F(1)F(0) ATP synthase produces ATP from ADP in the presence of a proton or sodium gradient. F-type ATPases consist of two structural domains, F(1) containing the extramembraneous catalytic core and F(0) containing the membrane proton channel, linked together by a central stalk and a peripheral stalk. During catalysis, ATP synthesis in the catalytic domain of F(1) is coupled via a rotary mechanism of the central stalk subunits to proton translocation.</text>
</comment>
<comment type="function">
    <text evidence="1">This protein is part of the stalk that links CF(0) to CF(1). It either transmits conformational changes from CF(0) to CF(1) or is implicated in proton conduction.</text>
</comment>
<comment type="subunit">
    <text evidence="1">F-type ATPases have 2 components, F(1) - the catalytic core - and F(0) - the membrane proton channel. F(1) has five subunits: alpha(3), beta(3), gamma(1), delta(1), epsilon(1). CF(0) has four main subunits: a(1), b(1), b'(1) and c(10-14). The alpha and beta chains form an alternating ring which encloses part of the gamma chain. F(1) is attached to F(0) by a central stalk formed by the gamma and epsilon chains, while a peripheral stalk is formed by the delta, b and b' chains.</text>
</comment>
<comment type="subcellular location">
    <subcellularLocation>
        <location evidence="1">Cellular thylakoid membrane</location>
        <topology evidence="1">Peripheral membrane protein</topology>
    </subcellularLocation>
</comment>
<comment type="similarity">
    <text evidence="1">Belongs to the ATPase delta chain family.</text>
</comment>
<proteinExistence type="inferred from homology"/>
<reference key="1">
    <citation type="journal article" date="2003" name="Proc. Natl. Acad. Sci. U.S.A.">
        <title>Genome sequence of the cyanobacterium Prochlorococcus marinus SS120, a nearly minimal oxyphototrophic genome.</title>
        <authorList>
            <person name="Dufresne A."/>
            <person name="Salanoubat M."/>
            <person name="Partensky F."/>
            <person name="Artiguenave F."/>
            <person name="Axmann I.M."/>
            <person name="Barbe V."/>
            <person name="Duprat S."/>
            <person name="Galperin M.Y."/>
            <person name="Koonin E.V."/>
            <person name="Le Gall F."/>
            <person name="Makarova K.S."/>
            <person name="Ostrowski M."/>
            <person name="Oztas S."/>
            <person name="Robert C."/>
            <person name="Rogozin I.B."/>
            <person name="Scanlan D.J."/>
            <person name="Tandeau de Marsac N."/>
            <person name="Weissenbach J."/>
            <person name="Wincker P."/>
            <person name="Wolf Y.I."/>
            <person name="Hess W.R."/>
        </authorList>
    </citation>
    <scope>NUCLEOTIDE SEQUENCE [LARGE SCALE GENOMIC DNA]</scope>
    <source>
        <strain>SARG / CCMP1375 / SS120</strain>
    </source>
</reference>
<name>ATPD_PROMA</name>
<gene>
    <name evidence="1" type="primary">atpH</name>
    <name evidence="1" type="synonym">atpD</name>
    <name type="ordered locus">Pro_1605</name>
</gene>
<keyword id="KW-0066">ATP synthesis</keyword>
<keyword id="KW-0139">CF(1)</keyword>
<keyword id="KW-0375">Hydrogen ion transport</keyword>
<keyword id="KW-0406">Ion transport</keyword>
<keyword id="KW-0472">Membrane</keyword>
<keyword id="KW-1185">Reference proteome</keyword>
<keyword id="KW-0793">Thylakoid</keyword>
<keyword id="KW-0813">Transport</keyword>
<evidence type="ECO:0000255" key="1">
    <source>
        <dbReference type="HAMAP-Rule" id="MF_01416"/>
    </source>
</evidence>
<protein>
    <recommendedName>
        <fullName evidence="1">ATP synthase subunit delta</fullName>
    </recommendedName>
    <alternativeName>
        <fullName evidence="1">ATP synthase F(1) sector subunit delta</fullName>
    </alternativeName>
    <alternativeName>
        <fullName evidence="1">F-type ATPase subunit delta</fullName>
        <shortName evidence="1">F-ATPase subunit delta</shortName>
    </alternativeName>
</protein>
<feature type="chain" id="PRO_0000371059" description="ATP synthase subunit delta">
    <location>
        <begin position="1"/>
        <end position="183"/>
    </location>
</feature>
<organism>
    <name type="scientific">Prochlorococcus marinus (strain SARG / CCMP1375 / SS120)</name>
    <dbReference type="NCBI Taxonomy" id="167539"/>
    <lineage>
        <taxon>Bacteria</taxon>
        <taxon>Bacillati</taxon>
        <taxon>Cyanobacteriota</taxon>
        <taxon>Cyanophyceae</taxon>
        <taxon>Synechococcales</taxon>
        <taxon>Prochlorococcaceae</taxon>
        <taxon>Prochlorococcus</taxon>
    </lineage>
</organism>
<sequence length="183" mass="20118">MMPLLNTITTPYAEAFLQVAENRNEVDEVVAQSKSLLELWGQSSEFSEAMASPVLEVETKKAVLEKIFSKEITPSFLNLLKLLADRKRIGYLDAVLERLLELYREQRNIALATVTSATSLNEDQQAEILKTVQSVAGTDNLELNLKVDPNLIGGFVVNVGSKVIDASLSSQVRRLGLALAKVS</sequence>